<dbReference type="EMBL" id="AE017332">
    <property type="protein sequence ID" value="AAV27698.1"/>
    <property type="molecule type" value="Genomic_DNA"/>
</dbReference>
<dbReference type="RefSeq" id="WP_011205880.1">
    <property type="nucleotide sequence ID" value="NC_006360.1"/>
</dbReference>
<dbReference type="SMR" id="Q602A9"/>
<dbReference type="KEGG" id="mhy:mhp041"/>
<dbReference type="eggNOG" id="COG0468">
    <property type="taxonomic scope" value="Bacteria"/>
</dbReference>
<dbReference type="HOGENOM" id="CLU_040469_1_2_14"/>
<dbReference type="PhylomeDB" id="Q602A9"/>
<dbReference type="Proteomes" id="UP000006822">
    <property type="component" value="Chromosome"/>
</dbReference>
<dbReference type="GO" id="GO:0005829">
    <property type="term" value="C:cytosol"/>
    <property type="evidence" value="ECO:0007669"/>
    <property type="project" value="TreeGrafter"/>
</dbReference>
<dbReference type="GO" id="GO:0005524">
    <property type="term" value="F:ATP binding"/>
    <property type="evidence" value="ECO:0007669"/>
    <property type="project" value="UniProtKB-UniRule"/>
</dbReference>
<dbReference type="GO" id="GO:0016887">
    <property type="term" value="F:ATP hydrolysis activity"/>
    <property type="evidence" value="ECO:0007669"/>
    <property type="project" value="InterPro"/>
</dbReference>
<dbReference type="GO" id="GO:0140664">
    <property type="term" value="F:ATP-dependent DNA damage sensor activity"/>
    <property type="evidence" value="ECO:0007669"/>
    <property type="project" value="InterPro"/>
</dbReference>
<dbReference type="GO" id="GO:0003684">
    <property type="term" value="F:damaged DNA binding"/>
    <property type="evidence" value="ECO:0007669"/>
    <property type="project" value="UniProtKB-UniRule"/>
</dbReference>
<dbReference type="GO" id="GO:0003697">
    <property type="term" value="F:single-stranded DNA binding"/>
    <property type="evidence" value="ECO:0007669"/>
    <property type="project" value="UniProtKB-UniRule"/>
</dbReference>
<dbReference type="GO" id="GO:0006310">
    <property type="term" value="P:DNA recombination"/>
    <property type="evidence" value="ECO:0007669"/>
    <property type="project" value="UniProtKB-UniRule"/>
</dbReference>
<dbReference type="GO" id="GO:0006281">
    <property type="term" value="P:DNA repair"/>
    <property type="evidence" value="ECO:0007669"/>
    <property type="project" value="UniProtKB-UniRule"/>
</dbReference>
<dbReference type="GO" id="GO:0009432">
    <property type="term" value="P:SOS response"/>
    <property type="evidence" value="ECO:0007669"/>
    <property type="project" value="UniProtKB-UniRule"/>
</dbReference>
<dbReference type="CDD" id="cd00983">
    <property type="entry name" value="RecA"/>
    <property type="match status" value="1"/>
</dbReference>
<dbReference type="FunFam" id="3.40.50.300:FF:000087">
    <property type="entry name" value="Recombinase RecA"/>
    <property type="match status" value="1"/>
</dbReference>
<dbReference type="Gene3D" id="3.40.50.300">
    <property type="entry name" value="P-loop containing nucleotide triphosphate hydrolases"/>
    <property type="match status" value="1"/>
</dbReference>
<dbReference type="HAMAP" id="MF_00268">
    <property type="entry name" value="RecA"/>
    <property type="match status" value="1"/>
</dbReference>
<dbReference type="InterPro" id="IPR003593">
    <property type="entry name" value="AAA+_ATPase"/>
</dbReference>
<dbReference type="InterPro" id="IPR013765">
    <property type="entry name" value="DNA_recomb/repair_RecA"/>
</dbReference>
<dbReference type="InterPro" id="IPR027417">
    <property type="entry name" value="P-loop_NTPase"/>
</dbReference>
<dbReference type="InterPro" id="IPR049261">
    <property type="entry name" value="RecA-like_C"/>
</dbReference>
<dbReference type="InterPro" id="IPR049428">
    <property type="entry name" value="RecA-like_N"/>
</dbReference>
<dbReference type="InterPro" id="IPR020588">
    <property type="entry name" value="RecA_ATP-bd"/>
</dbReference>
<dbReference type="InterPro" id="IPR023400">
    <property type="entry name" value="RecA_C_sf"/>
</dbReference>
<dbReference type="InterPro" id="IPR020587">
    <property type="entry name" value="RecA_monomer-monomer_interface"/>
</dbReference>
<dbReference type="NCBIfam" id="TIGR02012">
    <property type="entry name" value="tigrfam_recA"/>
    <property type="match status" value="1"/>
</dbReference>
<dbReference type="PANTHER" id="PTHR45900:SF1">
    <property type="entry name" value="MITOCHONDRIAL DNA REPAIR PROTEIN RECA HOMOLOG-RELATED"/>
    <property type="match status" value="1"/>
</dbReference>
<dbReference type="PANTHER" id="PTHR45900">
    <property type="entry name" value="RECA"/>
    <property type="match status" value="1"/>
</dbReference>
<dbReference type="Pfam" id="PF00154">
    <property type="entry name" value="RecA"/>
    <property type="match status" value="1"/>
</dbReference>
<dbReference type="Pfam" id="PF21096">
    <property type="entry name" value="RecA_C"/>
    <property type="match status" value="1"/>
</dbReference>
<dbReference type="PRINTS" id="PR00142">
    <property type="entry name" value="RECA"/>
</dbReference>
<dbReference type="SMART" id="SM00382">
    <property type="entry name" value="AAA"/>
    <property type="match status" value="1"/>
</dbReference>
<dbReference type="SUPFAM" id="SSF52540">
    <property type="entry name" value="P-loop containing nucleoside triphosphate hydrolases"/>
    <property type="match status" value="1"/>
</dbReference>
<dbReference type="SUPFAM" id="SSF54752">
    <property type="entry name" value="RecA protein, C-terminal domain"/>
    <property type="match status" value="1"/>
</dbReference>
<dbReference type="PROSITE" id="PS50162">
    <property type="entry name" value="RECA_2"/>
    <property type="match status" value="1"/>
</dbReference>
<dbReference type="PROSITE" id="PS50163">
    <property type="entry name" value="RECA_3"/>
    <property type="match status" value="1"/>
</dbReference>
<proteinExistence type="inferred from homology"/>
<feature type="chain" id="PRO_0000122759" description="Protein RecA">
    <location>
        <begin position="1"/>
        <end position="337"/>
    </location>
</feature>
<feature type="binding site" evidence="1">
    <location>
        <begin position="66"/>
        <end position="73"/>
    </location>
    <ligand>
        <name>ATP</name>
        <dbReference type="ChEBI" id="CHEBI:30616"/>
    </ligand>
</feature>
<reference key="1">
    <citation type="journal article" date="2004" name="J. Bacteriol.">
        <title>The genome sequence of Mycoplasma hyopneumoniae strain 232, the agent of swine mycoplasmosis.</title>
        <authorList>
            <person name="Minion F.C."/>
            <person name="Lefkowitz E.J."/>
            <person name="Madsen M.L."/>
            <person name="Cleary B.J."/>
            <person name="Swartzell S.M."/>
            <person name="Mahairas G.G."/>
        </authorList>
    </citation>
    <scope>NUCLEOTIDE SEQUENCE [LARGE SCALE GENOMIC DNA]</scope>
    <source>
        <strain>232</strain>
    </source>
</reference>
<organism>
    <name type="scientific">Mesomycoplasma hyopneumoniae (strain 232)</name>
    <name type="common">Mycoplasma hyopneumoniae</name>
    <dbReference type="NCBI Taxonomy" id="295358"/>
    <lineage>
        <taxon>Bacteria</taxon>
        <taxon>Bacillati</taxon>
        <taxon>Mycoplasmatota</taxon>
        <taxon>Mycoplasmoidales</taxon>
        <taxon>Metamycoplasmataceae</taxon>
        <taxon>Mesomycoplasma</taxon>
    </lineage>
</organism>
<keyword id="KW-0067">ATP-binding</keyword>
<keyword id="KW-0963">Cytoplasm</keyword>
<keyword id="KW-0227">DNA damage</keyword>
<keyword id="KW-0233">DNA recombination</keyword>
<keyword id="KW-0234">DNA repair</keyword>
<keyword id="KW-0238">DNA-binding</keyword>
<keyword id="KW-0547">Nucleotide-binding</keyword>
<keyword id="KW-0742">SOS response</keyword>
<accession>Q602A9</accession>
<sequence length="337" mass="36608">MTEINEKSLLKQALAEIKKKFGNESIMVLGEKPPIDTEVFSSGSMAIDMALGIGGFPKGRIIEIYGPESSGKTTISLHAIAEVQKQGGIAAFIDAEHSIDPQYAKNLGIDIDNLILSQPDSGEQALDIVDTLTKTKAIDLIVVDSVAALVPMAELQGEMKDQVIGAQARLMSKALRKITASLNKNGTTVIFINQIREKVGVIFGNPETTPGGRGLKFYASIRLDVRKIQQITSGNDITGHSVKIKVVKNKLAIPFKTALVEIVFAKGISKSAEIAQLGEELGILVRKGSWFAYKGENIAQGKVNLKLLLENNTKLFNEIKDQIIEKLKENQQQSQTL</sequence>
<evidence type="ECO:0000255" key="1">
    <source>
        <dbReference type="HAMAP-Rule" id="MF_00268"/>
    </source>
</evidence>
<comment type="function">
    <text evidence="1">Can catalyze the hydrolysis of ATP in the presence of single-stranded DNA, the ATP-dependent uptake of single-stranded DNA by duplex DNA, and the ATP-dependent hybridization of homologous single-stranded DNAs. It interacts with LexA causing its activation and leading to its autocatalytic cleavage.</text>
</comment>
<comment type="subcellular location">
    <subcellularLocation>
        <location evidence="1">Cytoplasm</location>
    </subcellularLocation>
</comment>
<comment type="similarity">
    <text evidence="1">Belongs to the RecA family.</text>
</comment>
<name>RECA_MESH2</name>
<gene>
    <name evidence="1" type="primary">recA</name>
    <name type="ordered locus">mhp041</name>
</gene>
<protein>
    <recommendedName>
        <fullName evidence="1">Protein RecA</fullName>
    </recommendedName>
    <alternativeName>
        <fullName evidence="1">Recombinase A</fullName>
    </alternativeName>
</protein>